<name>RSXC_ECOHS</name>
<protein>
    <recommendedName>
        <fullName evidence="1">Ion-translocating oxidoreductase complex subunit C</fullName>
        <ecNumber evidence="1">7.-.-.-</ecNumber>
    </recommendedName>
    <alternativeName>
        <fullName evidence="1">Rsx electron transport complex subunit C</fullName>
    </alternativeName>
</protein>
<proteinExistence type="inferred from homology"/>
<comment type="function">
    <text evidence="1">Part of a membrane-bound complex that couples electron transfer with translocation of ions across the membrane. Required to maintain the reduced state of SoxR.</text>
</comment>
<comment type="cofactor">
    <cofactor evidence="1">
        <name>[4Fe-4S] cluster</name>
        <dbReference type="ChEBI" id="CHEBI:49883"/>
    </cofactor>
    <text evidence="1">Binds 2 [4Fe-4S] clusters per subunit.</text>
</comment>
<comment type="subunit">
    <text evidence="1">The complex is composed of six subunits: RsxA, RsxB, RsxC, RsxD, RsxE and RsxG.</text>
</comment>
<comment type="subcellular location">
    <subcellularLocation>
        <location evidence="1">Cell inner membrane</location>
        <topology evidence="1">Peripheral membrane protein</topology>
    </subcellularLocation>
</comment>
<comment type="similarity">
    <text evidence="1">Belongs to the 4Fe4S bacterial-type ferredoxin family. RnfC subfamily.</text>
</comment>
<gene>
    <name evidence="1" type="primary">rsxC</name>
    <name type="synonym">rnfC</name>
    <name type="ordered locus">EcHS_A1705</name>
</gene>
<evidence type="ECO:0000255" key="1">
    <source>
        <dbReference type="HAMAP-Rule" id="MF_00461"/>
    </source>
</evidence>
<evidence type="ECO:0000256" key="2">
    <source>
        <dbReference type="SAM" id="MobiDB-lite"/>
    </source>
</evidence>
<dbReference type="EC" id="7.-.-.-" evidence="1"/>
<dbReference type="EMBL" id="CP000802">
    <property type="protein sequence ID" value="ABV06026.1"/>
    <property type="molecule type" value="Genomic_DNA"/>
</dbReference>
<dbReference type="RefSeq" id="WP_000915785.1">
    <property type="nucleotide sequence ID" value="NC_009800.1"/>
</dbReference>
<dbReference type="SMR" id="A8A0H2"/>
<dbReference type="KEGG" id="ecx:EcHS_A1705"/>
<dbReference type="HOGENOM" id="CLU_010808_2_1_6"/>
<dbReference type="GO" id="GO:0005886">
    <property type="term" value="C:plasma membrane"/>
    <property type="evidence" value="ECO:0007669"/>
    <property type="project" value="UniProtKB-SubCell"/>
</dbReference>
<dbReference type="GO" id="GO:0051539">
    <property type="term" value="F:4 iron, 4 sulfur cluster binding"/>
    <property type="evidence" value="ECO:0007669"/>
    <property type="project" value="UniProtKB-KW"/>
</dbReference>
<dbReference type="GO" id="GO:0009055">
    <property type="term" value="F:electron transfer activity"/>
    <property type="evidence" value="ECO:0007669"/>
    <property type="project" value="InterPro"/>
</dbReference>
<dbReference type="GO" id="GO:0046872">
    <property type="term" value="F:metal ion binding"/>
    <property type="evidence" value="ECO:0007669"/>
    <property type="project" value="UniProtKB-KW"/>
</dbReference>
<dbReference type="GO" id="GO:0022900">
    <property type="term" value="P:electron transport chain"/>
    <property type="evidence" value="ECO:0007669"/>
    <property type="project" value="UniProtKB-UniRule"/>
</dbReference>
<dbReference type="Gene3D" id="3.30.70.20">
    <property type="match status" value="1"/>
</dbReference>
<dbReference type="Gene3D" id="3.40.50.11540">
    <property type="entry name" value="NADH-ubiquinone oxidoreductase 51kDa subunit"/>
    <property type="match status" value="1"/>
</dbReference>
<dbReference type="HAMAP" id="MF_00461">
    <property type="entry name" value="RsxC_RnfC"/>
    <property type="match status" value="1"/>
</dbReference>
<dbReference type="InterPro" id="IPR017896">
    <property type="entry name" value="4Fe4S_Fe-S-bd"/>
</dbReference>
<dbReference type="InterPro" id="IPR017900">
    <property type="entry name" value="4Fe4S_Fe_S_CS"/>
</dbReference>
<dbReference type="InterPro" id="IPR010208">
    <property type="entry name" value="Ion_transpt_RnfC/RsxC"/>
</dbReference>
<dbReference type="InterPro" id="IPR011538">
    <property type="entry name" value="Nuo51_FMN-bd"/>
</dbReference>
<dbReference type="InterPro" id="IPR037225">
    <property type="entry name" value="Nuo51_FMN-bd_sf"/>
</dbReference>
<dbReference type="InterPro" id="IPR026902">
    <property type="entry name" value="RnfC_N"/>
</dbReference>
<dbReference type="InterPro" id="IPR019554">
    <property type="entry name" value="Soluble_ligand-bd"/>
</dbReference>
<dbReference type="NCBIfam" id="NF003454">
    <property type="entry name" value="PRK05035.1"/>
    <property type="match status" value="1"/>
</dbReference>
<dbReference type="NCBIfam" id="TIGR01945">
    <property type="entry name" value="rnfC"/>
    <property type="match status" value="1"/>
</dbReference>
<dbReference type="PANTHER" id="PTHR43034">
    <property type="entry name" value="ION-TRANSLOCATING OXIDOREDUCTASE COMPLEX SUBUNIT C"/>
    <property type="match status" value="1"/>
</dbReference>
<dbReference type="PANTHER" id="PTHR43034:SF2">
    <property type="entry name" value="ION-TRANSLOCATING OXIDOREDUCTASE COMPLEX SUBUNIT C"/>
    <property type="match status" value="1"/>
</dbReference>
<dbReference type="Pfam" id="PF01512">
    <property type="entry name" value="Complex1_51K"/>
    <property type="match status" value="1"/>
</dbReference>
<dbReference type="Pfam" id="PF12838">
    <property type="entry name" value="Fer4_7"/>
    <property type="match status" value="1"/>
</dbReference>
<dbReference type="Pfam" id="PF13375">
    <property type="entry name" value="RnfC_N"/>
    <property type="match status" value="1"/>
</dbReference>
<dbReference type="Pfam" id="PF10531">
    <property type="entry name" value="SLBB"/>
    <property type="match status" value="1"/>
</dbReference>
<dbReference type="SUPFAM" id="SSF46548">
    <property type="entry name" value="alpha-helical ferredoxin"/>
    <property type="match status" value="1"/>
</dbReference>
<dbReference type="SUPFAM" id="SSF142019">
    <property type="entry name" value="Nqo1 FMN-binding domain-like"/>
    <property type="match status" value="1"/>
</dbReference>
<dbReference type="PROSITE" id="PS00198">
    <property type="entry name" value="4FE4S_FER_1"/>
    <property type="match status" value="2"/>
</dbReference>
<dbReference type="PROSITE" id="PS51379">
    <property type="entry name" value="4FE4S_FER_2"/>
    <property type="match status" value="2"/>
</dbReference>
<keyword id="KW-0004">4Fe-4S</keyword>
<keyword id="KW-0997">Cell inner membrane</keyword>
<keyword id="KW-1003">Cell membrane</keyword>
<keyword id="KW-0249">Electron transport</keyword>
<keyword id="KW-0408">Iron</keyword>
<keyword id="KW-0411">Iron-sulfur</keyword>
<keyword id="KW-0472">Membrane</keyword>
<keyword id="KW-0479">Metal-binding</keyword>
<keyword id="KW-0677">Repeat</keyword>
<keyword id="KW-1278">Translocase</keyword>
<keyword id="KW-0813">Transport</keyword>
<accession>A8A0H2</accession>
<feature type="chain" id="PRO_1000060339" description="Ion-translocating oxidoreductase complex subunit C">
    <location>
        <begin position="1"/>
        <end position="740"/>
    </location>
</feature>
<feature type="domain" description="4Fe-4S ferredoxin-type 1" evidence="1">
    <location>
        <begin position="369"/>
        <end position="397"/>
    </location>
</feature>
<feature type="domain" description="4Fe-4S ferredoxin-type 2" evidence="1">
    <location>
        <begin position="407"/>
        <end position="436"/>
    </location>
</feature>
<feature type="region of interest" description="Disordered" evidence="2">
    <location>
        <begin position="602"/>
        <end position="621"/>
    </location>
</feature>
<feature type="region of interest" description="Disordered" evidence="2">
    <location>
        <begin position="660"/>
        <end position="718"/>
    </location>
</feature>
<feature type="compositionally biased region" description="Basic and acidic residues" evidence="2">
    <location>
        <begin position="611"/>
        <end position="621"/>
    </location>
</feature>
<feature type="binding site" evidence="1">
    <location>
        <position position="377"/>
    </location>
    <ligand>
        <name>[4Fe-4S] cluster</name>
        <dbReference type="ChEBI" id="CHEBI:49883"/>
        <label>1</label>
    </ligand>
</feature>
<feature type="binding site" evidence="1">
    <location>
        <position position="380"/>
    </location>
    <ligand>
        <name>[4Fe-4S] cluster</name>
        <dbReference type="ChEBI" id="CHEBI:49883"/>
        <label>1</label>
    </ligand>
</feature>
<feature type="binding site" evidence="1">
    <location>
        <position position="383"/>
    </location>
    <ligand>
        <name>[4Fe-4S] cluster</name>
        <dbReference type="ChEBI" id="CHEBI:49883"/>
        <label>1</label>
    </ligand>
</feature>
<feature type="binding site" evidence="1">
    <location>
        <position position="387"/>
    </location>
    <ligand>
        <name>[4Fe-4S] cluster</name>
        <dbReference type="ChEBI" id="CHEBI:49883"/>
        <label>2</label>
    </ligand>
</feature>
<feature type="binding site" evidence="1">
    <location>
        <position position="416"/>
    </location>
    <ligand>
        <name>[4Fe-4S] cluster</name>
        <dbReference type="ChEBI" id="CHEBI:49883"/>
        <label>2</label>
    </ligand>
</feature>
<feature type="binding site" evidence="1">
    <location>
        <position position="419"/>
    </location>
    <ligand>
        <name>[4Fe-4S] cluster</name>
        <dbReference type="ChEBI" id="CHEBI:49883"/>
        <label>2</label>
    </ligand>
</feature>
<feature type="binding site" evidence="1">
    <location>
        <position position="422"/>
    </location>
    <ligand>
        <name>[4Fe-4S] cluster</name>
        <dbReference type="ChEBI" id="CHEBI:49883"/>
        <label>2</label>
    </ligand>
</feature>
<feature type="binding site" evidence="1">
    <location>
        <position position="426"/>
    </location>
    <ligand>
        <name>[4Fe-4S] cluster</name>
        <dbReference type="ChEBI" id="CHEBI:49883"/>
        <label>1</label>
    </ligand>
</feature>
<reference key="1">
    <citation type="journal article" date="2008" name="J. Bacteriol.">
        <title>The pangenome structure of Escherichia coli: comparative genomic analysis of E. coli commensal and pathogenic isolates.</title>
        <authorList>
            <person name="Rasko D.A."/>
            <person name="Rosovitz M.J."/>
            <person name="Myers G.S.A."/>
            <person name="Mongodin E.F."/>
            <person name="Fricke W.F."/>
            <person name="Gajer P."/>
            <person name="Crabtree J."/>
            <person name="Sebaihia M."/>
            <person name="Thomson N.R."/>
            <person name="Chaudhuri R."/>
            <person name="Henderson I.R."/>
            <person name="Sperandio V."/>
            <person name="Ravel J."/>
        </authorList>
    </citation>
    <scope>NUCLEOTIDE SEQUENCE [LARGE SCALE GENOMIC DNA]</scope>
    <source>
        <strain>HS</strain>
    </source>
</reference>
<organism>
    <name type="scientific">Escherichia coli O9:H4 (strain HS)</name>
    <dbReference type="NCBI Taxonomy" id="331112"/>
    <lineage>
        <taxon>Bacteria</taxon>
        <taxon>Pseudomonadati</taxon>
        <taxon>Pseudomonadota</taxon>
        <taxon>Gammaproteobacteria</taxon>
        <taxon>Enterobacterales</taxon>
        <taxon>Enterobacteriaceae</taxon>
        <taxon>Escherichia</taxon>
    </lineage>
</organism>
<sequence length="740" mass="80220">MLKLFSAFRKNKIWDFNGGIHPPEMKTQSNGTPLRQVPLAQRFVIPLKQHIGAEGELCVSVGDKVLRGQPLTRGRGKMLPVHAPTSGTVTAIAPHSTAHPSALAELSVIIDADGEDCWIPRDGWADYRTRSREELIERIHQFGVAGLGGAGFPTGVKLQGGGDKIETLIINAAECEPYITADDRLMQDCAAQVVEGIRILAHILQPREILIGIEDNKPQAISMLRAVLADSNDISLRVIPTKYPSGGAKQLTYILTGKQVPHGGRSSDIGVLMQNVGTAYAVKRAVIDGEPITERVVTLTGEAIARPGNVWARLGTPVRHLLNDAGFCPSADQMVIMGGPLMGFTLPWLDVPVVKITNCLLAPSANELGEPQEEQSCIRCSACADACPADLLPQQLYWFSKGQQHDKATTHNIADCIECGACAWVCPSNIPLVQYFRQEKAEIAAIRQEEKRAAEAKARFEARQARLEREKAARLERHKSAAVQPAAKDKDAIAAALARVKEKQAQATQPIVIKAGERPDNSAIIAAREARKAQARAKQAELQQTNDAATVADPRKTAVEAAIARAKARKLEQQQANAEPEQQVDPRKAAVEAAIARAKARKLEQQQANAKPEEQVDPRKAAVEAAIARAKARKLEQQQANAEPEEQVDPRKAAVEAAIARAKARKLEQQQANAEPEEQVDPRKAAVEAAIARAKARKLEQQQTNAEPEEQVDPRKAAVAAAIARAQAKKAAQQKVVNED</sequence>